<reference key="1">
    <citation type="journal article" date="2005" name="BMC Genomics">
        <title>Characterization of 954 bovine full-CDS cDNA sequences.</title>
        <authorList>
            <person name="Harhay G.P."/>
            <person name="Sonstegard T.S."/>
            <person name="Keele J.W."/>
            <person name="Heaton M.P."/>
            <person name="Clawson M.L."/>
            <person name="Snelling W.M."/>
            <person name="Wiedmann R.T."/>
            <person name="Van Tassell C.P."/>
            <person name="Smith T.P.L."/>
        </authorList>
    </citation>
    <scope>NUCLEOTIDE SEQUENCE [LARGE SCALE MRNA] (ISOFORM 2)</scope>
</reference>
<reference key="2">
    <citation type="journal article" date="2009" name="Science">
        <title>The genome sequence of taurine cattle: a window to ruminant biology and evolution.</title>
        <authorList>
            <consortium name="The bovine genome sequencing and analysis consortium"/>
        </authorList>
    </citation>
    <scope>NUCLEOTIDE SEQUENCE [LARGE SCALE GENOMIC DNA]</scope>
</reference>
<reference key="3">
    <citation type="submission" date="2006-10" db="EMBL/GenBank/DDBJ databases">
        <authorList>
            <consortium name="NIH - Mammalian Gene Collection (MGC) project"/>
        </authorList>
    </citation>
    <scope>NUCLEOTIDE SEQUENCE [LARGE SCALE MRNA] OF 59-885 (ISOFORM 2)</scope>
    <source>
        <strain>Hereford</strain>
        <tissue>Thalamus</tissue>
    </source>
</reference>
<protein>
    <recommendedName>
        <fullName evidence="2">Cytosolic carboxypeptidase-like protein 5</fullName>
        <ecNumber evidence="2">3.4.17.-</ecNumber>
        <ecNumber evidence="2">3.4.17.24</ecNumber>
    </recommendedName>
    <alternativeName>
        <fullName>ATP/GTP-binding protein-like 5</fullName>
    </alternativeName>
    <alternativeName>
        <fullName evidence="8">Protein deglutamylase CCP5</fullName>
    </alternativeName>
</protein>
<evidence type="ECO:0000250" key="1">
    <source>
        <dbReference type="UniProtKB" id="P00730"/>
    </source>
</evidence>
<evidence type="ECO:0000250" key="2">
    <source>
        <dbReference type="UniProtKB" id="Q09M02"/>
    </source>
</evidence>
<evidence type="ECO:0000250" key="3">
    <source>
        <dbReference type="UniProtKB" id="Q8NDL9"/>
    </source>
</evidence>
<evidence type="ECO:0000255" key="4">
    <source>
        <dbReference type="PROSITE-ProRule" id="PRU01379"/>
    </source>
</evidence>
<evidence type="ECO:0000256" key="5">
    <source>
        <dbReference type="SAM" id="MobiDB-lite"/>
    </source>
</evidence>
<evidence type="ECO:0000303" key="6">
    <source>
    </source>
</evidence>
<evidence type="ECO:0000303" key="7">
    <source ref="3"/>
</evidence>
<evidence type="ECO:0000305" key="8"/>
<name>CBPC5_BOVIN</name>
<feature type="chain" id="PRO_0000305920" description="Cytosolic carboxypeptidase-like protein 5">
    <location>
        <begin position="1"/>
        <end position="885"/>
    </location>
</feature>
<feature type="domain" description="Peptidase M14" evidence="4">
    <location>
        <begin position="157"/>
        <end position="570"/>
    </location>
</feature>
<feature type="region of interest" description="Disordered" evidence="5">
    <location>
        <begin position="343"/>
        <end position="402"/>
    </location>
</feature>
<feature type="region of interest" description="Disordered" evidence="5">
    <location>
        <begin position="605"/>
        <end position="733"/>
    </location>
</feature>
<feature type="region of interest" description="Disordered" evidence="5">
    <location>
        <begin position="783"/>
        <end position="839"/>
    </location>
</feature>
<feature type="compositionally biased region" description="Polar residues" evidence="5">
    <location>
        <begin position="388"/>
        <end position="402"/>
    </location>
</feature>
<feature type="compositionally biased region" description="Polar residues" evidence="5">
    <location>
        <begin position="620"/>
        <end position="640"/>
    </location>
</feature>
<feature type="compositionally biased region" description="Low complexity" evidence="5">
    <location>
        <begin position="641"/>
        <end position="666"/>
    </location>
</feature>
<feature type="compositionally biased region" description="Low complexity" evidence="5">
    <location>
        <begin position="714"/>
        <end position="733"/>
    </location>
</feature>
<feature type="active site" description="Proton donor/acceptor" evidence="4">
    <location>
        <position position="516"/>
    </location>
</feature>
<feature type="binding site" evidence="4">
    <location>
        <position position="252"/>
    </location>
    <ligand>
        <name>Zn(2+)</name>
        <dbReference type="ChEBI" id="CHEBI:29105"/>
        <note>catalytic</note>
    </ligand>
</feature>
<feature type="binding site" evidence="4">
    <location>
        <position position="255"/>
    </location>
    <ligand>
        <name>Zn(2+)</name>
        <dbReference type="ChEBI" id="CHEBI:29105"/>
        <note>catalytic</note>
    </ligand>
</feature>
<feature type="binding site" evidence="4">
    <location>
        <position position="434"/>
    </location>
    <ligand>
        <name>Zn(2+)</name>
        <dbReference type="ChEBI" id="CHEBI:29105"/>
        <note>catalytic</note>
    </ligand>
</feature>
<feature type="modified residue" description="Phosphoserine" evidence="2">
    <location>
        <position position="840"/>
    </location>
</feature>
<feature type="splice variant" id="VSP_040426" description="In isoform 2." evidence="6 7">
    <original>EPRSQDRRRRQQPVTHRPTSSSLAPSPTPASSNLASSHMGSCLLPNSLSISGSSCSFLSSGDKTEAVMVIGKGLLGAGPRIPCIRTRLQARPRLAQGSPPTRRGMRGSPGPTSPIPQTKKSSEPELGPRCTPRLPQAGPPRPCSAPAFSPISCSLSDSQSRICYSGGPLGQTEVCFVPKSPPFTVSPRV</original>
    <variation>GKLVWEPLQQVFGCLGHCWGK</variation>
    <location>
        <begin position="697"/>
        <end position="885"/>
    </location>
</feature>
<feature type="sequence conflict" description="In Ref. 1; AAX46665." evidence="8" ref="1">
    <original>SR</original>
    <variation>CG</variation>
    <location>
        <begin position="12"/>
        <end position="13"/>
    </location>
</feature>
<comment type="function">
    <text evidence="2">Metallocarboxypeptidase that mediates deglutamylation of tubulin and non-tubulin target proteins. Catalyzes the removal of polyglutamate side chains present on the gamma-carboxyl group of glutamate residues within the C-terminal tail of alpha- and beta-tubulin. Cleaves alpha- and gamma-linked polyglutamate tubulin side-chain, as well as the branching point glutamate. Also catalyzes the removal of alpha-linked glutamate residues from the carboxy-terminus of alpha-tubulin. Mediates deglutamylation of nucleotidyltransferase CGAS, leading to CGAS antiviral defense response activation.</text>
</comment>
<comment type="catalytic activity">
    <reaction evidence="2">
        <text>gamma-L-glutamyl-L-glutamyl-[protein] + H2O = L-glutamyl-[protein] + L-glutamate</text>
        <dbReference type="Rhea" id="RHEA:60152"/>
        <dbReference type="Rhea" id="RHEA-COMP:10208"/>
        <dbReference type="Rhea" id="RHEA-COMP:15517"/>
        <dbReference type="ChEBI" id="CHEBI:15377"/>
        <dbReference type="ChEBI" id="CHEBI:29973"/>
        <dbReference type="ChEBI" id="CHEBI:29985"/>
        <dbReference type="ChEBI" id="CHEBI:143622"/>
    </reaction>
    <physiologicalReaction direction="left-to-right" evidence="2">
        <dbReference type="Rhea" id="RHEA:60153"/>
    </physiologicalReaction>
</comment>
<comment type="catalytic activity">
    <reaction evidence="2">
        <text>(L-glutamyl)(n+1)-gamma-L-glutamyl-L-glutamyl-[protein] + H2O = (L-glutamyl)(n)-gamma-L-glutamyl-L-glutamyl-[protein] + L-glutamate</text>
        <dbReference type="Rhea" id="RHEA:60004"/>
        <dbReference type="Rhea" id="RHEA-COMP:15519"/>
        <dbReference type="Rhea" id="RHEA-COMP:15675"/>
        <dbReference type="ChEBI" id="CHEBI:15377"/>
        <dbReference type="ChEBI" id="CHEBI:29985"/>
        <dbReference type="ChEBI" id="CHEBI:143623"/>
    </reaction>
    <physiologicalReaction direction="left-to-right" evidence="2">
        <dbReference type="Rhea" id="RHEA:60005"/>
    </physiologicalReaction>
</comment>
<comment type="catalytic activity">
    <reaction evidence="2">
        <text>C-terminal L-alpha-aminoacyl-L-glutamyl-[tubulin] + H2O = C-terminal L-alpha-aminoacyl-[tubulin] + L-glutamate</text>
        <dbReference type="Rhea" id="RHEA:63796"/>
        <dbReference type="Rhea" id="RHEA-COMP:16436"/>
        <dbReference type="Rhea" id="RHEA-COMP:16437"/>
        <dbReference type="ChEBI" id="CHEBI:15377"/>
        <dbReference type="ChEBI" id="CHEBI:29985"/>
        <dbReference type="ChEBI" id="CHEBI:90782"/>
        <dbReference type="ChEBI" id="CHEBI:149556"/>
        <dbReference type="EC" id="3.4.17.24"/>
    </reaction>
    <physiologicalReaction direction="left-to-right" evidence="2">
        <dbReference type="Rhea" id="RHEA:63797"/>
    </physiologicalReaction>
</comment>
<comment type="catalytic activity">
    <reaction evidence="2">
        <text>C-terminal L-alpha-aminoacyl-L-glutamyl-L-glutamyl-[tubulin] + H2O = C-terminal L-alpha-aminoacyl-L-glutamyl-[tubulin] + L-glutamate</text>
        <dbReference type="Rhea" id="RHEA:63792"/>
        <dbReference type="Rhea" id="RHEA-COMP:16435"/>
        <dbReference type="Rhea" id="RHEA-COMP:16436"/>
        <dbReference type="ChEBI" id="CHEBI:15377"/>
        <dbReference type="ChEBI" id="CHEBI:29985"/>
        <dbReference type="ChEBI" id="CHEBI:149555"/>
        <dbReference type="ChEBI" id="CHEBI:149556"/>
        <dbReference type="EC" id="3.4.17.24"/>
    </reaction>
    <physiologicalReaction direction="left-to-right" evidence="2">
        <dbReference type="Rhea" id="RHEA:63793"/>
    </physiologicalReaction>
</comment>
<comment type="cofactor">
    <cofactor evidence="1">
        <name>Zn(2+)</name>
        <dbReference type="ChEBI" id="CHEBI:29105"/>
    </cofactor>
    <text evidence="1">Binds 1 zinc ion per subunit.</text>
</comment>
<comment type="subcellular location">
    <subcellularLocation>
        <location evidence="2">Cytoplasm</location>
        <location evidence="2">Cytosol</location>
    </subcellularLocation>
    <subcellularLocation>
        <location evidence="2">Nucleus</location>
    </subcellularLocation>
    <subcellularLocation>
        <location evidence="3">Cytoplasm</location>
        <location evidence="3">Cytoskeleton</location>
        <location evidence="3">Spindle</location>
    </subcellularLocation>
    <subcellularLocation>
        <location evidence="3">Midbody</location>
    </subcellularLocation>
    <text evidence="2 3">Mainly cytoplasmic. Slight accumulation in the nucleus is observed. Colocalizes with alpha-tubulin in the mitotic spindle and with midbody microtubules in the intercellular bridges formed during cytokinesis.</text>
</comment>
<comment type="alternative products">
    <event type="alternative splicing"/>
    <isoform>
        <id>Q58CX9-1</id>
        <name>1</name>
        <sequence type="displayed"/>
    </isoform>
    <isoform>
        <id>Q58CX9-2</id>
        <name>2</name>
        <sequence type="described" ref="VSP_040426"/>
    </isoform>
</comment>
<comment type="similarity">
    <text evidence="8">Belongs to the peptidase M14 family.</text>
</comment>
<dbReference type="EC" id="3.4.17.-" evidence="2"/>
<dbReference type="EC" id="3.4.17.24" evidence="2"/>
<dbReference type="EMBL" id="BT021818">
    <property type="protein sequence ID" value="AAX46665.1"/>
    <property type="molecule type" value="mRNA"/>
</dbReference>
<dbReference type="EMBL" id="AAFC03088657">
    <property type="status" value="NOT_ANNOTATED_CDS"/>
    <property type="molecule type" value="Genomic_DNA"/>
</dbReference>
<dbReference type="EMBL" id="BC126504">
    <property type="protein sequence ID" value="AAI26505.1"/>
    <property type="molecule type" value="mRNA"/>
</dbReference>
<dbReference type="RefSeq" id="NP_001019735.1">
    <property type="nucleotide sequence ID" value="NM_001024564.1"/>
</dbReference>
<dbReference type="RefSeq" id="XP_005213081.1">
    <molecule id="Q58CX9-1"/>
    <property type="nucleotide sequence ID" value="XM_005213024.5"/>
</dbReference>
<dbReference type="RefSeq" id="XP_024854709.1">
    <molecule id="Q58CX9-1"/>
    <property type="nucleotide sequence ID" value="XM_024998941.2"/>
</dbReference>
<dbReference type="RefSeq" id="XP_024854710.1">
    <molecule id="Q58CX9-1"/>
    <property type="nucleotide sequence ID" value="XM_024998942.2"/>
</dbReference>
<dbReference type="RefSeq" id="XP_024854714.1">
    <molecule id="Q58CX9-1"/>
    <property type="nucleotide sequence ID" value="XM_024998946.2"/>
</dbReference>
<dbReference type="SMR" id="Q58CX9"/>
<dbReference type="FunCoup" id="Q58CX9">
    <property type="interactions" value="2072"/>
</dbReference>
<dbReference type="STRING" id="9913.ENSBTAP00000067922"/>
<dbReference type="MEROPS" id="M14.025"/>
<dbReference type="MEROPS" id="M14.036"/>
<dbReference type="PaxDb" id="9913-ENSBTAP00000017831"/>
<dbReference type="Ensembl" id="ENSBTAT00000079929.2">
    <molecule id="Q58CX9-1"/>
    <property type="protein sequence ID" value="ENSBTAP00000067922.1"/>
    <property type="gene ID" value="ENSBTAG00000013403.7"/>
</dbReference>
<dbReference type="GeneID" id="538585"/>
<dbReference type="KEGG" id="bta:538585"/>
<dbReference type="CTD" id="60509"/>
<dbReference type="VEuPathDB" id="HostDB:ENSBTAG00000013403"/>
<dbReference type="eggNOG" id="KOG3641">
    <property type="taxonomic scope" value="Eukaryota"/>
</dbReference>
<dbReference type="GeneTree" id="ENSGT00940000158032"/>
<dbReference type="HOGENOM" id="CLU_007523_3_2_1"/>
<dbReference type="InParanoid" id="Q58CX9"/>
<dbReference type="OMA" id="LMHGCID"/>
<dbReference type="OrthoDB" id="10253041at2759"/>
<dbReference type="TreeFam" id="TF324301"/>
<dbReference type="Proteomes" id="UP000009136">
    <property type="component" value="Chromosome 11"/>
</dbReference>
<dbReference type="Bgee" id="ENSBTAG00000013403">
    <property type="expression patterns" value="Expressed in spermatid and 110 other cell types or tissues"/>
</dbReference>
<dbReference type="GO" id="GO:0005737">
    <property type="term" value="C:cytoplasm"/>
    <property type="evidence" value="ECO:0000318"/>
    <property type="project" value="GO_Central"/>
</dbReference>
<dbReference type="GO" id="GO:0005829">
    <property type="term" value="C:cytosol"/>
    <property type="evidence" value="ECO:0000250"/>
    <property type="project" value="UniProtKB"/>
</dbReference>
<dbReference type="GO" id="GO:0015630">
    <property type="term" value="C:microtubule cytoskeleton"/>
    <property type="evidence" value="ECO:0000318"/>
    <property type="project" value="GO_Central"/>
</dbReference>
<dbReference type="GO" id="GO:0030496">
    <property type="term" value="C:midbody"/>
    <property type="evidence" value="ECO:0000250"/>
    <property type="project" value="UniProtKB"/>
</dbReference>
<dbReference type="GO" id="GO:0072686">
    <property type="term" value="C:mitotic spindle"/>
    <property type="evidence" value="ECO:0000250"/>
    <property type="project" value="UniProtKB"/>
</dbReference>
<dbReference type="GO" id="GO:0005634">
    <property type="term" value="C:nucleus"/>
    <property type="evidence" value="ECO:0000250"/>
    <property type="project" value="UniProtKB"/>
</dbReference>
<dbReference type="GO" id="GO:0004181">
    <property type="term" value="F:metallocarboxypeptidase activity"/>
    <property type="evidence" value="ECO:0000250"/>
    <property type="project" value="UniProtKB"/>
</dbReference>
<dbReference type="GO" id="GO:0015631">
    <property type="term" value="F:tubulin binding"/>
    <property type="evidence" value="ECO:0000250"/>
    <property type="project" value="UniProtKB"/>
</dbReference>
<dbReference type="GO" id="GO:0008270">
    <property type="term" value="F:zinc ion binding"/>
    <property type="evidence" value="ECO:0007669"/>
    <property type="project" value="InterPro"/>
</dbReference>
<dbReference type="GO" id="GO:0035609">
    <property type="term" value="P:C-terminal protein deglutamylation"/>
    <property type="evidence" value="ECO:0000250"/>
    <property type="project" value="UniProtKB"/>
</dbReference>
<dbReference type="GO" id="GO:0051607">
    <property type="term" value="P:defense response to virus"/>
    <property type="evidence" value="ECO:0000250"/>
    <property type="project" value="UniProtKB"/>
</dbReference>
<dbReference type="GO" id="GO:0035611">
    <property type="term" value="P:protein branching point deglutamylation"/>
    <property type="evidence" value="ECO:0000250"/>
    <property type="project" value="UniProtKB"/>
</dbReference>
<dbReference type="GO" id="GO:0035608">
    <property type="term" value="P:protein deglutamylation"/>
    <property type="evidence" value="ECO:0000250"/>
    <property type="project" value="UniProtKB"/>
</dbReference>
<dbReference type="GO" id="GO:0035610">
    <property type="term" value="P:protein side chain deglutamylation"/>
    <property type="evidence" value="ECO:0000250"/>
    <property type="project" value="UniProtKB"/>
</dbReference>
<dbReference type="GO" id="GO:0006508">
    <property type="term" value="P:proteolysis"/>
    <property type="evidence" value="ECO:0007669"/>
    <property type="project" value="UniProtKB-KW"/>
</dbReference>
<dbReference type="CDD" id="cd06236">
    <property type="entry name" value="M14_AGBL5_like"/>
    <property type="match status" value="1"/>
</dbReference>
<dbReference type="FunFam" id="3.40.630.10:FF:000055">
    <property type="entry name" value="Cytosolic carboxypeptidase-like protein 5 isoform X1"/>
    <property type="match status" value="1"/>
</dbReference>
<dbReference type="FunFam" id="3.40.630.10:FF:000049">
    <property type="entry name" value="cytosolic carboxypeptidase-like protein 5 isoform X1"/>
    <property type="match status" value="1"/>
</dbReference>
<dbReference type="FunFam" id="2.60.40.3120:FF:000002">
    <property type="entry name" value="cytosolic carboxypeptidase-like protein 5 isoform X2"/>
    <property type="match status" value="1"/>
</dbReference>
<dbReference type="Gene3D" id="2.60.40.3120">
    <property type="match status" value="1"/>
</dbReference>
<dbReference type="Gene3D" id="3.40.630.10">
    <property type="entry name" value="Zn peptidases"/>
    <property type="match status" value="2"/>
</dbReference>
<dbReference type="InterPro" id="IPR050821">
    <property type="entry name" value="Cytosolic_carboxypeptidase"/>
</dbReference>
<dbReference type="InterPro" id="IPR034286">
    <property type="entry name" value="M14_AGBL5-like"/>
</dbReference>
<dbReference type="InterPro" id="IPR040626">
    <property type="entry name" value="Pepdidase_M14_N"/>
</dbReference>
<dbReference type="InterPro" id="IPR000834">
    <property type="entry name" value="Peptidase_M14"/>
</dbReference>
<dbReference type="PANTHER" id="PTHR12756">
    <property type="entry name" value="CYTOSOLIC CARBOXYPEPTIDASE"/>
    <property type="match status" value="1"/>
</dbReference>
<dbReference type="PANTHER" id="PTHR12756:SF12">
    <property type="entry name" value="CYTOSOLIC CARBOXYPEPTIDASE-LIKE PROTEIN 5"/>
    <property type="match status" value="1"/>
</dbReference>
<dbReference type="Pfam" id="PF18027">
    <property type="entry name" value="Pepdidase_M14_N"/>
    <property type="match status" value="1"/>
</dbReference>
<dbReference type="Pfam" id="PF00246">
    <property type="entry name" value="Peptidase_M14"/>
    <property type="match status" value="1"/>
</dbReference>
<dbReference type="SUPFAM" id="SSF53187">
    <property type="entry name" value="Zn-dependent exopeptidases"/>
    <property type="match status" value="1"/>
</dbReference>
<dbReference type="PROSITE" id="PS52035">
    <property type="entry name" value="PEPTIDASE_M14"/>
    <property type="match status" value="1"/>
</dbReference>
<gene>
    <name type="primary">AGBL5</name>
    <name evidence="2" type="synonym">CCP5</name>
</gene>
<organism>
    <name type="scientific">Bos taurus</name>
    <name type="common">Bovine</name>
    <dbReference type="NCBI Taxonomy" id="9913"/>
    <lineage>
        <taxon>Eukaryota</taxon>
        <taxon>Metazoa</taxon>
        <taxon>Chordata</taxon>
        <taxon>Craniata</taxon>
        <taxon>Vertebrata</taxon>
        <taxon>Euteleostomi</taxon>
        <taxon>Mammalia</taxon>
        <taxon>Eutheria</taxon>
        <taxon>Laurasiatheria</taxon>
        <taxon>Artiodactyla</taxon>
        <taxon>Ruminantia</taxon>
        <taxon>Pecora</taxon>
        <taxon>Bovidae</taxon>
        <taxon>Bovinae</taxon>
        <taxon>Bos</taxon>
    </lineage>
</organism>
<keyword id="KW-0025">Alternative splicing</keyword>
<keyword id="KW-0121">Carboxypeptidase</keyword>
<keyword id="KW-0963">Cytoplasm</keyword>
<keyword id="KW-0206">Cytoskeleton</keyword>
<keyword id="KW-0378">Hydrolase</keyword>
<keyword id="KW-0479">Metal-binding</keyword>
<keyword id="KW-0482">Metalloprotease</keyword>
<keyword id="KW-0539">Nucleus</keyword>
<keyword id="KW-0597">Phosphoprotein</keyword>
<keyword id="KW-0645">Protease</keyword>
<keyword id="KW-1185">Reference proteome</keyword>
<keyword id="KW-0862">Zinc</keyword>
<sequence length="885" mass="97441">MELRCGGLLFSSRFDSGNLAHVEKVESVSNDGEGVAGGASASTSSIASSPDYEFNVWTRPDCAETEFENGNRSWFYFSVRGGTPGKLIKINIMNMNKQSKLYSQGMAPFVRTLPTRPRWERIRDRPTFEMTETQFVLSFIHRFVEGRGATTFFAFCYPFSYSDCQDLLSQLDQRFLENSPTHSSPLDTIYYHRETLCYSLDGLRVDLLTISSCHGLREDREPRLEQLFPDASTPRPFRFTGKRIFFLSSRVHPGETPSSFVFNGFLDFILRPDDPRAQTLRRLFVFKLIPMLNPDGVVRGHYRTDSRGVNLNRQYLKPDAVLHPAIYGAKAVLLYHHVHSRLNSQSPSEHQHSSHLPPDAPLSDPEKADSLQNRAHLGRSSSGDKPEAWTQTEVAEQKPNSVWITPQESAEVEQLAPDAIPPRESGVAYYVDLHGHASKRGCFMYGNSFSDENTQVENMLYPKLISLNSAHFDFQGCNFSEKNMYARDRRDGQSKEGSGRVAIYKASGIIHSYTLECNYNTGRSVNSIPAACHDNGRASPPPPPAFPSRYTVELFEQVGRAMAIAALDMAECNPWPRIVLSEHSSLTNLRAWMLKHVRSSRGLSTTVNMSISKKRGSRTPPRSNNGLPVSCSENTLSRARSFSTGTSAGGSSSSQQNSPQMKNSPSFPFHGSRPAGLPGLGSSTQKVSHRVLGPVREPRSQDRRRRQQPVTHRPTSSSLAPSPTPASSNLASSHMGSCLLPNSLSISGSSCSFLSSGDKTEAVMVIGKGLLGAGPRIPCIRTRLQARPRLAQGSPPTRRGMRGSPGPTSPIPQTKKSSEPELGPRCTPRLPQAGPPRPCSAPAFSPISCSLSDSQSRICYSGGPLGQTEVCFVPKSPPFTVSPRV</sequence>
<accession>Q58CX9</accession>
<accession>A1A4I0</accession>
<accession>E1B7H7</accession>
<proteinExistence type="evidence at transcript level"/>